<proteinExistence type="inferred from homology"/>
<reference key="1">
    <citation type="journal article" date="2001" name="Proc. Natl. Acad. Sci. U.S.A.">
        <title>Complete genomic sequence of Pasteurella multocida Pm70.</title>
        <authorList>
            <person name="May B.J."/>
            <person name="Zhang Q."/>
            <person name="Li L.L."/>
            <person name="Paustian M.L."/>
            <person name="Whittam T.S."/>
            <person name="Kapur V."/>
        </authorList>
    </citation>
    <scope>NUCLEOTIDE SEQUENCE [LARGE SCALE GENOMIC DNA]</scope>
    <source>
        <strain>Pm70</strain>
    </source>
</reference>
<accession>Q9CL89</accession>
<protein>
    <recommendedName>
        <fullName>Sulfurtransferase TusD homolog</fullName>
        <ecNumber>2.8.1.-</ecNumber>
    </recommendedName>
</protein>
<feature type="chain" id="PRO_0000214729" description="Sulfurtransferase TusD homolog">
    <location>
        <begin position="1"/>
        <end position="126"/>
    </location>
</feature>
<feature type="active site" description="Cysteine persulfide intermediate" evidence="1">
    <location>
        <position position="78"/>
    </location>
</feature>
<dbReference type="EC" id="2.8.1.-"/>
<dbReference type="EMBL" id="AE004439">
    <property type="protein sequence ID" value="AAK03435.1"/>
    <property type="molecule type" value="Genomic_DNA"/>
</dbReference>
<dbReference type="RefSeq" id="WP_005723957.1">
    <property type="nucleotide sequence ID" value="NC_002663.1"/>
</dbReference>
<dbReference type="SMR" id="Q9CL89"/>
<dbReference type="STRING" id="272843.PM1351"/>
<dbReference type="EnsemblBacteria" id="AAK03435">
    <property type="protein sequence ID" value="AAK03435"/>
    <property type="gene ID" value="PM1351"/>
</dbReference>
<dbReference type="KEGG" id="pmu:PM1351"/>
<dbReference type="HOGENOM" id="CLU_132095_0_0_6"/>
<dbReference type="OrthoDB" id="9787483at2"/>
<dbReference type="Proteomes" id="UP000000809">
    <property type="component" value="Chromosome"/>
</dbReference>
<dbReference type="GO" id="GO:1990228">
    <property type="term" value="C:sulfurtransferase complex"/>
    <property type="evidence" value="ECO:0007669"/>
    <property type="project" value="TreeGrafter"/>
</dbReference>
<dbReference type="GO" id="GO:0097163">
    <property type="term" value="F:sulfur carrier activity"/>
    <property type="evidence" value="ECO:0007669"/>
    <property type="project" value="TreeGrafter"/>
</dbReference>
<dbReference type="GO" id="GO:0016783">
    <property type="term" value="F:sulfurtransferase activity"/>
    <property type="evidence" value="ECO:0007669"/>
    <property type="project" value="InterPro"/>
</dbReference>
<dbReference type="GO" id="GO:0002143">
    <property type="term" value="P:tRNA wobble position uridine thiolation"/>
    <property type="evidence" value="ECO:0007669"/>
    <property type="project" value="TreeGrafter"/>
</dbReference>
<dbReference type="FunFam" id="3.40.1260.10:FF:000001">
    <property type="entry name" value="Sulfurtransferase TusD"/>
    <property type="match status" value="1"/>
</dbReference>
<dbReference type="Gene3D" id="3.40.1260.10">
    <property type="entry name" value="DsrEFH-like"/>
    <property type="match status" value="1"/>
</dbReference>
<dbReference type="InterPro" id="IPR027396">
    <property type="entry name" value="DsrEFH-like"/>
</dbReference>
<dbReference type="InterPro" id="IPR003787">
    <property type="entry name" value="Sulphur_relay_DsrE/F-like"/>
</dbReference>
<dbReference type="InterPro" id="IPR017463">
    <property type="entry name" value="Sulphur_relay_TusD/DsrE"/>
</dbReference>
<dbReference type="NCBIfam" id="NF001237">
    <property type="entry name" value="PRK00207.1"/>
    <property type="match status" value="1"/>
</dbReference>
<dbReference type="NCBIfam" id="TIGR03012">
    <property type="entry name" value="sulf_tusD_dsrE"/>
    <property type="match status" value="1"/>
</dbReference>
<dbReference type="PANTHER" id="PTHR34874">
    <property type="entry name" value="PROTEIN YCHN"/>
    <property type="match status" value="1"/>
</dbReference>
<dbReference type="PANTHER" id="PTHR34874:SF3">
    <property type="entry name" value="SULFURTRANSFERASE TUSD"/>
    <property type="match status" value="1"/>
</dbReference>
<dbReference type="Pfam" id="PF02635">
    <property type="entry name" value="DsrE"/>
    <property type="match status" value="1"/>
</dbReference>
<dbReference type="SUPFAM" id="SSF75169">
    <property type="entry name" value="DsrEFH-like"/>
    <property type="match status" value="1"/>
</dbReference>
<organism>
    <name type="scientific">Pasteurella multocida (strain Pm70)</name>
    <dbReference type="NCBI Taxonomy" id="272843"/>
    <lineage>
        <taxon>Bacteria</taxon>
        <taxon>Pseudomonadati</taxon>
        <taxon>Pseudomonadota</taxon>
        <taxon>Gammaproteobacteria</taxon>
        <taxon>Pasteurellales</taxon>
        <taxon>Pasteurellaceae</taxon>
        <taxon>Pasteurella</taxon>
    </lineage>
</organism>
<evidence type="ECO:0000250" key="1"/>
<evidence type="ECO:0000305" key="2"/>
<keyword id="KW-0963">Cytoplasm</keyword>
<keyword id="KW-1185">Reference proteome</keyword>
<keyword id="KW-0808">Transferase</keyword>
<gene>
    <name type="primary">tusD</name>
    <name type="ordered locus">PM1351</name>
</gene>
<sequence>MRYVLCVKQPAYGKQGGFLAYQLAKALLEKGHQITQVFFFQEGVTHGNAFLYPASDEFNLQHAWQRLAQDYHVPLHLCVAAAQRRGVVEPLTSSTTQQNNLASCFVLAGLGEFMKASLEADRVVCL</sequence>
<comment type="function">
    <text evidence="1">Could be part of a sulfur-relay system.</text>
</comment>
<comment type="subcellular location">
    <subcellularLocation>
        <location evidence="1">Cytoplasm</location>
    </subcellularLocation>
</comment>
<comment type="similarity">
    <text evidence="2">Belongs to the DsrE/TusD family.</text>
</comment>
<name>TUSD_PASMU</name>